<dbReference type="EC" id="1.6.3.5" evidence="2"/>
<dbReference type="EMBL" id="DQ788834">
    <property type="protein sequence ID" value="ABG82016.1"/>
    <property type="molecule type" value="mRNA"/>
</dbReference>
<dbReference type="EMBL" id="AK170321">
    <property type="protein sequence ID" value="BAE41716.1"/>
    <property type="molecule type" value="mRNA"/>
</dbReference>
<dbReference type="EMBL" id="BC052355">
    <property type="protein sequence ID" value="AAH52355.2"/>
    <property type="status" value="ALT_SEQ"/>
    <property type="molecule type" value="mRNA"/>
</dbReference>
<dbReference type="RefSeq" id="NP_001139814.2">
    <property type="nucleotide sequence ID" value="NM_001146342.2"/>
</dbReference>
<dbReference type="RefSeq" id="NP_001161290.1">
    <property type="nucleotide sequence ID" value="NM_001167818.1"/>
</dbReference>
<dbReference type="SMR" id="A7RDN6"/>
<dbReference type="FunCoup" id="A7RDN6">
    <property type="interactions" value="103"/>
</dbReference>
<dbReference type="PhosphoSitePlus" id="A7RDN6"/>
<dbReference type="PaxDb" id="10090-ENSMUSP00000093825"/>
<dbReference type="ProteomicsDB" id="300458">
    <molecule id="A7RDN6-1"/>
</dbReference>
<dbReference type="ProteomicsDB" id="300459">
    <molecule id="A7RDN6-2"/>
</dbReference>
<dbReference type="UCSC" id="uc008hft.2">
    <molecule id="A7RDN6-1"/>
    <property type="organism name" value="mouse"/>
</dbReference>
<dbReference type="AGR" id="MGI:1915045"/>
<dbReference type="MGI" id="MGI:1915045">
    <property type="gene designation" value="Rnls"/>
</dbReference>
<dbReference type="eggNOG" id="ENOG502QUZR">
    <property type="taxonomic scope" value="Eukaryota"/>
</dbReference>
<dbReference type="InParanoid" id="A7RDN6"/>
<dbReference type="PhylomeDB" id="A7RDN6"/>
<dbReference type="TreeFam" id="TF332799"/>
<dbReference type="BRENDA" id="1.6.3.5">
    <property type="organism ID" value="3474"/>
</dbReference>
<dbReference type="Reactome" id="R-MMU-197264">
    <property type="pathway name" value="Nicotinamide salvaging"/>
</dbReference>
<dbReference type="BioGRID-ORCS" id="67795">
    <property type="hits" value="1 hit in 75 CRISPR screens"/>
</dbReference>
<dbReference type="ChiTaRS" id="Rnls">
    <property type="organism name" value="mouse"/>
</dbReference>
<dbReference type="PRO" id="PR:A7RDN6"/>
<dbReference type="Proteomes" id="UP000000589">
    <property type="component" value="Unplaced"/>
</dbReference>
<dbReference type="RNAct" id="A7RDN6">
    <property type="molecule type" value="protein"/>
</dbReference>
<dbReference type="GO" id="GO:0005576">
    <property type="term" value="C:extracellular region"/>
    <property type="evidence" value="ECO:0007669"/>
    <property type="project" value="UniProtKB-SubCell"/>
</dbReference>
<dbReference type="GO" id="GO:0016491">
    <property type="term" value="F:oxidoreductase activity"/>
    <property type="evidence" value="ECO:0000314"/>
    <property type="project" value="MGI"/>
</dbReference>
<dbReference type="GO" id="GO:0016651">
    <property type="term" value="F:oxidoreductase activity, acting on NAD(P)H"/>
    <property type="evidence" value="ECO:0007669"/>
    <property type="project" value="InterPro"/>
</dbReference>
<dbReference type="GO" id="GO:0003214">
    <property type="term" value="P:cardiac left ventricle morphogenesis"/>
    <property type="evidence" value="ECO:0000315"/>
    <property type="project" value="MGI"/>
</dbReference>
<dbReference type="GO" id="GO:0042417">
    <property type="term" value="P:dopamine metabolic process"/>
    <property type="evidence" value="ECO:0000315"/>
    <property type="project" value="MGI"/>
</dbReference>
<dbReference type="GO" id="GO:0042414">
    <property type="term" value="P:epinephrine metabolic process"/>
    <property type="evidence" value="ECO:0000315"/>
    <property type="project" value="MGI"/>
</dbReference>
<dbReference type="GO" id="GO:0060047">
    <property type="term" value="P:heart contraction"/>
    <property type="evidence" value="ECO:0000315"/>
    <property type="project" value="MGI"/>
</dbReference>
<dbReference type="GO" id="GO:0042415">
    <property type="term" value="P:norepinephrine metabolic process"/>
    <property type="evidence" value="ECO:0000315"/>
    <property type="project" value="MGI"/>
</dbReference>
<dbReference type="GO" id="GO:0055062">
    <property type="term" value="P:phosphate ion homeostasis"/>
    <property type="evidence" value="ECO:0000315"/>
    <property type="project" value="MGI"/>
</dbReference>
<dbReference type="GO" id="GO:0003073">
    <property type="term" value="P:regulation of systemic arterial blood pressure"/>
    <property type="evidence" value="ECO:0000315"/>
    <property type="project" value="MGI"/>
</dbReference>
<dbReference type="GO" id="GO:0071873">
    <property type="term" value="P:response to norepinephrine"/>
    <property type="evidence" value="ECO:0000315"/>
    <property type="project" value="MGI"/>
</dbReference>
<dbReference type="Gene3D" id="3.90.660.10">
    <property type="match status" value="1"/>
</dbReference>
<dbReference type="Gene3D" id="3.50.50.60">
    <property type="entry name" value="FAD/NAD(P)-binding domain"/>
    <property type="match status" value="1"/>
</dbReference>
<dbReference type="InterPro" id="IPR002937">
    <property type="entry name" value="Amino_oxidase"/>
</dbReference>
<dbReference type="InterPro" id="IPR036188">
    <property type="entry name" value="FAD/NAD-bd_sf"/>
</dbReference>
<dbReference type="InterPro" id="IPR040174">
    <property type="entry name" value="RNLS"/>
</dbReference>
<dbReference type="PANTHER" id="PTHR23357">
    <property type="entry name" value="RENALASE"/>
    <property type="match status" value="1"/>
</dbReference>
<dbReference type="PANTHER" id="PTHR23357:SF1">
    <property type="entry name" value="RENALASE"/>
    <property type="match status" value="1"/>
</dbReference>
<dbReference type="Pfam" id="PF01593">
    <property type="entry name" value="Amino_oxidase"/>
    <property type="match status" value="1"/>
</dbReference>
<dbReference type="Pfam" id="PF13450">
    <property type="entry name" value="NAD_binding_8"/>
    <property type="match status" value="1"/>
</dbReference>
<dbReference type="SUPFAM" id="SSF51905">
    <property type="entry name" value="FAD/NAD(P)-binding domain"/>
    <property type="match status" value="1"/>
</dbReference>
<gene>
    <name evidence="12" type="primary">Rnls</name>
</gene>
<feature type="signal peptide" evidence="3">
    <location>
        <begin position="1"/>
        <end position="17"/>
    </location>
</feature>
<feature type="chain" id="PRO_0000376858" description="Renalase" evidence="3">
    <location>
        <begin position="18"/>
        <end position="342"/>
    </location>
</feature>
<feature type="binding site" evidence="1">
    <location>
        <position position="12"/>
    </location>
    <ligand>
        <name>FAD</name>
        <dbReference type="ChEBI" id="CHEBI:57692"/>
    </ligand>
</feature>
<feature type="binding site" evidence="1">
    <location>
        <position position="42"/>
    </location>
    <ligand>
        <name>FAD</name>
        <dbReference type="ChEBI" id="CHEBI:57692"/>
    </ligand>
</feature>
<feature type="binding site" evidence="1">
    <location>
        <begin position="61"/>
        <end position="62"/>
    </location>
    <ligand>
        <name>FAD</name>
        <dbReference type="ChEBI" id="CHEBI:57692"/>
    </ligand>
</feature>
<feature type="splice variant" id="VSP_053114" description="In isoform 2." evidence="6">
    <location>
        <begin position="41"/>
        <end position="123"/>
    </location>
</feature>
<feature type="sequence conflict" description="In Ref. 1; ABG82016 and 2; BAE41716." evidence="8" ref="1 2">
    <original>G</original>
    <variation>A</variation>
    <location>
        <position position="31"/>
    </location>
</feature>
<feature type="sequence conflict" description="In Ref. 1; ABG82016 and 2; BAE41716." evidence="8" ref="1 2">
    <original>G</original>
    <variation>A</variation>
    <location>
        <position position="36"/>
    </location>
</feature>
<feature type="sequence conflict" description="In Ref. 2; BAE41716." evidence="8" ref="2">
    <original>K</original>
    <variation>E</variation>
    <location>
        <position position="138"/>
    </location>
</feature>
<keyword id="KW-0025">Alternative splicing</keyword>
<keyword id="KW-0274">FAD</keyword>
<keyword id="KW-0285">Flavoprotein</keyword>
<keyword id="KW-0520">NAD</keyword>
<keyword id="KW-0521">NADP</keyword>
<keyword id="KW-0560">Oxidoreductase</keyword>
<keyword id="KW-1185">Reference proteome</keyword>
<keyword id="KW-0964">Secreted</keyword>
<keyword id="KW-0732">Signal</keyword>
<evidence type="ECO:0000250" key="1"/>
<evidence type="ECO:0000250" key="2">
    <source>
        <dbReference type="UniProtKB" id="Q5VYX0"/>
    </source>
</evidence>
<evidence type="ECO:0000255" key="3"/>
<evidence type="ECO:0000269" key="4">
    <source>
    </source>
</evidence>
<evidence type="ECO:0000269" key="5">
    <source>
    </source>
</evidence>
<evidence type="ECO:0000303" key="6">
    <source>
    </source>
</evidence>
<evidence type="ECO:0000303" key="7">
    <source>
    </source>
</evidence>
<evidence type="ECO:0000305" key="8"/>
<evidence type="ECO:0000312" key="9">
    <source>
        <dbReference type="EMBL" id="AAH52355.2"/>
    </source>
</evidence>
<evidence type="ECO:0000312" key="10">
    <source>
        <dbReference type="EMBL" id="ABG82016.1"/>
    </source>
</evidence>
<evidence type="ECO:0000312" key="11">
    <source>
        <dbReference type="EMBL" id="BAE41716.1"/>
    </source>
</evidence>
<evidence type="ECO:0000312" key="12">
    <source>
        <dbReference type="MGI" id="MGI:1915045"/>
    </source>
</evidence>
<protein>
    <recommendedName>
        <fullName evidence="7">Renalase</fullName>
        <ecNumber evidence="2">1.6.3.5</ecNumber>
    </recommendedName>
    <alternativeName>
        <fullName evidence="7">Monoamine oxidase-C</fullName>
        <shortName>MAO-C</shortName>
        <shortName evidence="7">mMAO-C</shortName>
    </alternativeName>
</protein>
<sequence>MSRVLVVGAGLTGSLCAALLRKEITAPLYLGLWDKGGDIGGRMITASSPHNPRCTADLGAQYITCSPHYVKEHQNFYEELLAHGILKPLTSPIEGMKGKEGDCNFVAPQGFSSVIKYYLKKSGAEVSLKHCVTQIHLKDNKWEVSTDTGSAEQFDLVILTMPAPQILELQGDIVNLISERQREQLKSVSYSSRYALGLFYEVGMKIGVPWSCRYLSSHPCICFISIDNKKRNIESSECGPSVVIQTTVPFGVQHLEASEADVQKLMIQQLETILPGLPQPVATICHKWTYSQVTSSVSDRPGQMTLHLKPFLVCGGDGFTHSNFNGCISSALSVMKVLKRYI</sequence>
<name>RNLS_MOUSE</name>
<comment type="function">
    <text evidence="2">Catalyzes the oxidation of the less abundant 1,2-dihydro-beta-NAD(P) and 1,6-dihydro-beta-NAD(P) to form beta-NAD(P)(+). The enzyme hormone is secreted by the kidney, and circulates in blood and modulates cardiac function and systemic blood pressure. Lowers blood pressure in vivo by decreasing cardiac contractility and heart rate and preventing a compensatory increase in peripheral vascular tone, suggesting a causal link to the increased plasma catecholamine and heightened cardiovascular risk. High concentrations of catecholamines activate plasma renalase and promotes its secretion and synthesis.</text>
</comment>
<comment type="catalytic activity">
    <reaction evidence="2">
        <text>1,2-dihydro-beta-NAD + O2 + H(+) = H2O2 + NAD(+)</text>
        <dbReference type="Rhea" id="RHEA:40395"/>
        <dbReference type="ChEBI" id="CHEBI:15378"/>
        <dbReference type="ChEBI" id="CHEBI:15379"/>
        <dbReference type="ChEBI" id="CHEBI:16240"/>
        <dbReference type="ChEBI" id="CHEBI:57540"/>
        <dbReference type="ChEBI" id="CHEBI:88138"/>
        <dbReference type="EC" id="1.6.3.5"/>
    </reaction>
</comment>
<comment type="catalytic activity">
    <reaction evidence="2">
        <text>1,2-dihydro-beta-NADP + O2 + H(+) = H2O2 + NADP(+)</text>
        <dbReference type="Rhea" id="RHEA:40399"/>
        <dbReference type="ChEBI" id="CHEBI:15378"/>
        <dbReference type="ChEBI" id="CHEBI:15379"/>
        <dbReference type="ChEBI" id="CHEBI:16240"/>
        <dbReference type="ChEBI" id="CHEBI:58349"/>
        <dbReference type="ChEBI" id="CHEBI:88137"/>
        <dbReference type="EC" id="1.6.3.5"/>
    </reaction>
</comment>
<comment type="catalytic activity">
    <reaction evidence="2">
        <text>1,6-dihydro-beta-NADP + O2 + H(+) = H2O2 + NADP(+)</text>
        <dbReference type="Rhea" id="RHEA:48000"/>
        <dbReference type="ChEBI" id="CHEBI:15378"/>
        <dbReference type="ChEBI" id="CHEBI:15379"/>
        <dbReference type="ChEBI" id="CHEBI:16240"/>
        <dbReference type="ChEBI" id="CHEBI:58349"/>
        <dbReference type="ChEBI" id="CHEBI:88139"/>
        <dbReference type="EC" id="1.6.3.5"/>
    </reaction>
</comment>
<comment type="catalytic activity">
    <reaction evidence="2">
        <text>1,6-dihydro-beta-NAD + O2 + H(+) = H2O2 + NAD(+)</text>
        <dbReference type="Rhea" id="RHEA:47996"/>
        <dbReference type="ChEBI" id="CHEBI:15378"/>
        <dbReference type="ChEBI" id="CHEBI:15379"/>
        <dbReference type="ChEBI" id="CHEBI:16240"/>
        <dbReference type="ChEBI" id="CHEBI:57540"/>
        <dbReference type="ChEBI" id="CHEBI:88140"/>
        <dbReference type="EC" id="1.6.3.5"/>
    </reaction>
</comment>
<comment type="cofactor">
    <cofactor evidence="2">
        <name>FAD</name>
        <dbReference type="ChEBI" id="CHEBI:57692"/>
    </cofactor>
</comment>
<comment type="subcellular location">
    <subcellularLocation>
        <location evidence="5">Secreted</location>
    </subcellularLocation>
</comment>
<comment type="alternative products">
    <event type="alternative splicing"/>
    <isoform>
        <id>A7RDN6-1</id>
        <name evidence="5">1</name>
        <sequence type="displayed"/>
    </isoform>
    <isoform>
        <id>A7RDN6-2</id>
        <name evidence="4">2</name>
        <sequence type="described" ref="VSP_053114"/>
    </isoform>
</comment>
<comment type="tissue specificity">
    <text evidence="5">Expressed predominantly in kidney and testis with lower levels in liver, heart and embryo and weak expression in brain and skeletal muscle.</text>
</comment>
<comment type="similarity">
    <text evidence="3">Belongs to the renalase family.</text>
</comment>
<comment type="sequence caution" evidence="8">
    <conflict type="erroneous termination">
        <sequence resource="EMBL-CDS" id="AAH52355"/>
    </conflict>
    <text>Truncated C-terminus.</text>
</comment>
<proteinExistence type="evidence at protein level"/>
<organism>
    <name type="scientific">Mus musculus</name>
    <name type="common">Mouse</name>
    <dbReference type="NCBI Taxonomy" id="10090"/>
    <lineage>
        <taxon>Eukaryota</taxon>
        <taxon>Metazoa</taxon>
        <taxon>Chordata</taxon>
        <taxon>Craniata</taxon>
        <taxon>Vertebrata</taxon>
        <taxon>Euteleostomi</taxon>
        <taxon>Mammalia</taxon>
        <taxon>Eutheria</taxon>
        <taxon>Euarchontoglires</taxon>
        <taxon>Glires</taxon>
        <taxon>Rodentia</taxon>
        <taxon>Myomorpha</taxon>
        <taxon>Muroidea</taxon>
        <taxon>Muridae</taxon>
        <taxon>Murinae</taxon>
        <taxon>Mus</taxon>
        <taxon>Mus</taxon>
    </lineage>
</organism>
<accession>A7RDN6</accession>
<accession>Q3TD88</accession>
<accession>Q80W75</accession>
<reference key="1">
    <citation type="journal article" date="2008" name="Mol. Biol. Rep.">
        <title>Identification, expression and tissue distribution of a renalase homologue from mouse.</title>
        <authorList>
            <person name="Wang J."/>
            <person name="Qi S."/>
            <person name="Cheng W."/>
            <person name="Li L."/>
            <person name="Wang F."/>
            <person name="Li Y.-Z."/>
            <person name="Zhang S.-P."/>
        </authorList>
    </citation>
    <scope>NUCLEOTIDE SEQUENCE [MRNA] (ISOFORM 1)</scope>
    <scope>SUBCELLULAR LOCATION</scope>
    <scope>TISSUE SPECIFICITY</scope>
    <source>
        <strain evidence="10">Kunming</strain>
        <tissue evidence="10">Kidney</tissue>
    </source>
</reference>
<reference key="2">
    <citation type="journal article" date="2005" name="Science">
        <title>The transcriptional landscape of the mammalian genome.</title>
        <authorList>
            <person name="Carninci P."/>
            <person name="Kasukawa T."/>
            <person name="Katayama S."/>
            <person name="Gough J."/>
            <person name="Frith M.C."/>
            <person name="Maeda N."/>
            <person name="Oyama R."/>
            <person name="Ravasi T."/>
            <person name="Lenhard B."/>
            <person name="Wells C."/>
            <person name="Kodzius R."/>
            <person name="Shimokawa K."/>
            <person name="Bajic V.B."/>
            <person name="Brenner S.E."/>
            <person name="Batalov S."/>
            <person name="Forrest A.R."/>
            <person name="Zavolan M."/>
            <person name="Davis M.J."/>
            <person name="Wilming L.G."/>
            <person name="Aidinis V."/>
            <person name="Allen J.E."/>
            <person name="Ambesi-Impiombato A."/>
            <person name="Apweiler R."/>
            <person name="Aturaliya R.N."/>
            <person name="Bailey T.L."/>
            <person name="Bansal M."/>
            <person name="Baxter L."/>
            <person name="Beisel K.W."/>
            <person name="Bersano T."/>
            <person name="Bono H."/>
            <person name="Chalk A.M."/>
            <person name="Chiu K.P."/>
            <person name="Choudhary V."/>
            <person name="Christoffels A."/>
            <person name="Clutterbuck D.R."/>
            <person name="Crowe M.L."/>
            <person name="Dalla E."/>
            <person name="Dalrymple B.P."/>
            <person name="de Bono B."/>
            <person name="Della Gatta G."/>
            <person name="di Bernardo D."/>
            <person name="Down T."/>
            <person name="Engstrom P."/>
            <person name="Fagiolini M."/>
            <person name="Faulkner G."/>
            <person name="Fletcher C.F."/>
            <person name="Fukushima T."/>
            <person name="Furuno M."/>
            <person name="Futaki S."/>
            <person name="Gariboldi M."/>
            <person name="Georgii-Hemming P."/>
            <person name="Gingeras T.R."/>
            <person name="Gojobori T."/>
            <person name="Green R.E."/>
            <person name="Gustincich S."/>
            <person name="Harbers M."/>
            <person name="Hayashi Y."/>
            <person name="Hensch T.K."/>
            <person name="Hirokawa N."/>
            <person name="Hill D."/>
            <person name="Huminiecki L."/>
            <person name="Iacono M."/>
            <person name="Ikeo K."/>
            <person name="Iwama A."/>
            <person name="Ishikawa T."/>
            <person name="Jakt M."/>
            <person name="Kanapin A."/>
            <person name="Katoh M."/>
            <person name="Kawasawa Y."/>
            <person name="Kelso J."/>
            <person name="Kitamura H."/>
            <person name="Kitano H."/>
            <person name="Kollias G."/>
            <person name="Krishnan S.P."/>
            <person name="Kruger A."/>
            <person name="Kummerfeld S.K."/>
            <person name="Kurochkin I.V."/>
            <person name="Lareau L.F."/>
            <person name="Lazarevic D."/>
            <person name="Lipovich L."/>
            <person name="Liu J."/>
            <person name="Liuni S."/>
            <person name="McWilliam S."/>
            <person name="Madan Babu M."/>
            <person name="Madera M."/>
            <person name="Marchionni L."/>
            <person name="Matsuda H."/>
            <person name="Matsuzawa S."/>
            <person name="Miki H."/>
            <person name="Mignone F."/>
            <person name="Miyake S."/>
            <person name="Morris K."/>
            <person name="Mottagui-Tabar S."/>
            <person name="Mulder N."/>
            <person name="Nakano N."/>
            <person name="Nakauchi H."/>
            <person name="Ng P."/>
            <person name="Nilsson R."/>
            <person name="Nishiguchi S."/>
            <person name="Nishikawa S."/>
            <person name="Nori F."/>
            <person name="Ohara O."/>
            <person name="Okazaki Y."/>
            <person name="Orlando V."/>
            <person name="Pang K.C."/>
            <person name="Pavan W.J."/>
            <person name="Pavesi G."/>
            <person name="Pesole G."/>
            <person name="Petrovsky N."/>
            <person name="Piazza S."/>
            <person name="Reed J."/>
            <person name="Reid J.F."/>
            <person name="Ring B.Z."/>
            <person name="Ringwald M."/>
            <person name="Rost B."/>
            <person name="Ruan Y."/>
            <person name="Salzberg S.L."/>
            <person name="Sandelin A."/>
            <person name="Schneider C."/>
            <person name="Schoenbach C."/>
            <person name="Sekiguchi K."/>
            <person name="Semple C.A."/>
            <person name="Seno S."/>
            <person name="Sessa L."/>
            <person name="Sheng Y."/>
            <person name="Shibata Y."/>
            <person name="Shimada H."/>
            <person name="Shimada K."/>
            <person name="Silva D."/>
            <person name="Sinclair B."/>
            <person name="Sperling S."/>
            <person name="Stupka E."/>
            <person name="Sugiura K."/>
            <person name="Sultana R."/>
            <person name="Takenaka Y."/>
            <person name="Taki K."/>
            <person name="Tammoja K."/>
            <person name="Tan S.L."/>
            <person name="Tang S."/>
            <person name="Taylor M.S."/>
            <person name="Tegner J."/>
            <person name="Teichmann S.A."/>
            <person name="Ueda H.R."/>
            <person name="van Nimwegen E."/>
            <person name="Verardo R."/>
            <person name="Wei C.L."/>
            <person name="Yagi K."/>
            <person name="Yamanishi H."/>
            <person name="Zabarovsky E."/>
            <person name="Zhu S."/>
            <person name="Zimmer A."/>
            <person name="Hide W."/>
            <person name="Bult C."/>
            <person name="Grimmond S.M."/>
            <person name="Teasdale R.D."/>
            <person name="Liu E.T."/>
            <person name="Brusic V."/>
            <person name="Quackenbush J."/>
            <person name="Wahlestedt C."/>
            <person name="Mattick J.S."/>
            <person name="Hume D.A."/>
            <person name="Kai C."/>
            <person name="Sasaki D."/>
            <person name="Tomaru Y."/>
            <person name="Fukuda S."/>
            <person name="Kanamori-Katayama M."/>
            <person name="Suzuki M."/>
            <person name="Aoki J."/>
            <person name="Arakawa T."/>
            <person name="Iida J."/>
            <person name="Imamura K."/>
            <person name="Itoh M."/>
            <person name="Kato T."/>
            <person name="Kawaji H."/>
            <person name="Kawagashira N."/>
            <person name="Kawashima T."/>
            <person name="Kojima M."/>
            <person name="Kondo S."/>
            <person name="Konno H."/>
            <person name="Nakano K."/>
            <person name="Ninomiya N."/>
            <person name="Nishio T."/>
            <person name="Okada M."/>
            <person name="Plessy C."/>
            <person name="Shibata K."/>
            <person name="Shiraki T."/>
            <person name="Suzuki S."/>
            <person name="Tagami M."/>
            <person name="Waki K."/>
            <person name="Watahiki A."/>
            <person name="Okamura-Oho Y."/>
            <person name="Suzuki H."/>
            <person name="Kawai J."/>
            <person name="Hayashizaki Y."/>
        </authorList>
    </citation>
    <scope>NUCLEOTIDE SEQUENCE [LARGE SCALE MRNA] (ISOFORM 2)</scope>
    <source>
        <strain evidence="11">NOD</strain>
        <tissue evidence="11">Dendritic cell</tissue>
    </source>
</reference>
<reference key="3">
    <citation type="journal article" date="2004" name="Genome Res.">
        <title>The status, quality, and expansion of the NIH full-length cDNA project: the Mammalian Gene Collection (MGC).</title>
        <authorList>
            <consortium name="The MGC Project Team"/>
        </authorList>
    </citation>
    <scope>NUCLEOTIDE SEQUENCE [LARGE SCALE MRNA] (ISOFORM 1)</scope>
    <source>
        <tissue evidence="9">Testis</tissue>
    </source>
</reference>
<reference key="4">
    <citation type="journal article" date="2010" name="Cell">
        <title>A tissue-specific atlas of mouse protein phosphorylation and expression.</title>
        <authorList>
            <person name="Huttlin E.L."/>
            <person name="Jedrychowski M.P."/>
            <person name="Elias J.E."/>
            <person name="Goswami T."/>
            <person name="Rad R."/>
            <person name="Beausoleil S.A."/>
            <person name="Villen J."/>
            <person name="Haas W."/>
            <person name="Sowa M.E."/>
            <person name="Gygi S.P."/>
        </authorList>
    </citation>
    <scope>IDENTIFICATION BY MASS SPECTROMETRY [LARGE SCALE ANALYSIS]</scope>
    <source>
        <tissue>Brown adipose tissue</tissue>
        <tissue>Heart</tissue>
        <tissue>Kidney</tissue>
        <tissue>Testis</tissue>
    </source>
</reference>